<protein>
    <recommendedName>
        <fullName>Cuticle protein AMP1A</fullName>
    </recommendedName>
    <alternativeName>
        <fullName>HA-AMP1A</fullName>
    </alternativeName>
</protein>
<proteinExistence type="evidence at protein level"/>
<dbReference type="EnsemblMetazoa" id="XM_042366948.1">
    <property type="protein sequence ID" value="XP_042222882.1"/>
    <property type="gene ID" value="LOC121867169"/>
</dbReference>
<dbReference type="OrthoDB" id="6359117at2759"/>
<dbReference type="GO" id="GO:0062129">
    <property type="term" value="C:chitin-based extracellular matrix"/>
    <property type="evidence" value="ECO:0007669"/>
    <property type="project" value="TreeGrafter"/>
</dbReference>
<dbReference type="GO" id="GO:0008010">
    <property type="term" value="F:structural constituent of chitin-based larval cuticle"/>
    <property type="evidence" value="ECO:0007669"/>
    <property type="project" value="TreeGrafter"/>
</dbReference>
<dbReference type="InterPro" id="IPR031311">
    <property type="entry name" value="CHIT_BIND_RR_consensus"/>
</dbReference>
<dbReference type="InterPro" id="IPR050468">
    <property type="entry name" value="Cuticle_Struct_Prot"/>
</dbReference>
<dbReference type="InterPro" id="IPR000618">
    <property type="entry name" value="Insect_cuticle"/>
</dbReference>
<dbReference type="PANTHER" id="PTHR10380">
    <property type="entry name" value="CUTICLE PROTEIN"/>
    <property type="match status" value="1"/>
</dbReference>
<dbReference type="PANTHER" id="PTHR10380:SF173">
    <property type="entry name" value="CUTICULAR PROTEIN 47EF, ISOFORM C-RELATED"/>
    <property type="match status" value="1"/>
</dbReference>
<dbReference type="Pfam" id="PF00379">
    <property type="entry name" value="Chitin_bind_4"/>
    <property type="match status" value="1"/>
</dbReference>
<dbReference type="PRINTS" id="PR00947">
    <property type="entry name" value="CUTICLE"/>
</dbReference>
<dbReference type="PROSITE" id="PS00233">
    <property type="entry name" value="CHIT_BIND_RR_1"/>
    <property type="match status" value="1"/>
</dbReference>
<dbReference type="PROSITE" id="PS51155">
    <property type="entry name" value="CHIT_BIND_RR_2"/>
    <property type="match status" value="1"/>
</dbReference>
<evidence type="ECO:0000255" key="1">
    <source>
        <dbReference type="PROSITE-ProRule" id="PRU00497"/>
    </source>
</evidence>
<evidence type="ECO:0000256" key="2">
    <source>
        <dbReference type="SAM" id="MobiDB-lite"/>
    </source>
</evidence>
<reference key="1">
    <citation type="journal article" date="1998" name="Comp. Biochem. Physiol.">
        <title>Characterization of exoskeletal proteins from the American lobster, Homarus americanus.</title>
        <authorList>
            <person name="Nousiainen M."/>
            <person name="Rafn K."/>
            <person name="Skou L."/>
            <person name="Roepstorff P."/>
            <person name="Andersen S.O."/>
        </authorList>
    </citation>
    <scope>PROTEIN SEQUENCE</scope>
    <source>
        <tissue>Cuticle</tissue>
    </source>
</reference>
<feature type="chain" id="PRO_0000196150" description="Cuticle protein AMP1A">
    <location>
        <begin position="1"/>
        <end position="105"/>
    </location>
</feature>
<feature type="domain" description="Chitin-binding type R&amp;R" evidence="1">
    <location>
        <begin position="16"/>
        <end position="81"/>
    </location>
</feature>
<feature type="region of interest" description="Disordered" evidence="2">
    <location>
        <begin position="1"/>
        <end position="21"/>
    </location>
</feature>
<sequence length="105" mass="11531">DRDAQTLTDERSDQGDGNFRYEFETSNGIYTQKTGTPGSEGQSNYQGSFRFTLEDGTIAEVTYIADENGFQPSSDLLPVGPPAPPHVQRLLEIAAEQRAQGITFD</sequence>
<name>CU1A_HOMAM</name>
<accession>P81384</accession>
<organism>
    <name type="scientific">Homarus americanus</name>
    <name type="common">American lobster</name>
    <dbReference type="NCBI Taxonomy" id="6706"/>
    <lineage>
        <taxon>Eukaryota</taxon>
        <taxon>Metazoa</taxon>
        <taxon>Ecdysozoa</taxon>
        <taxon>Arthropoda</taxon>
        <taxon>Crustacea</taxon>
        <taxon>Multicrustacea</taxon>
        <taxon>Malacostraca</taxon>
        <taxon>Eumalacostraca</taxon>
        <taxon>Eucarida</taxon>
        <taxon>Decapoda</taxon>
        <taxon>Pleocyemata</taxon>
        <taxon>Astacidea</taxon>
        <taxon>Nephropoidea</taxon>
        <taxon>Nephropidae</taxon>
        <taxon>Homarus</taxon>
    </lineage>
</organism>
<comment type="tissue specificity">
    <text>Arthrodial membrane.</text>
</comment>
<keyword id="KW-0193">Cuticle</keyword>
<keyword id="KW-0903">Direct protein sequencing</keyword>